<accession>Q1LSJ6</accession>
<organism>
    <name type="scientific">Baumannia cicadellinicola subsp. Homalodisca coagulata</name>
    <dbReference type="NCBI Taxonomy" id="374463"/>
    <lineage>
        <taxon>Bacteria</taxon>
        <taxon>Pseudomonadati</taxon>
        <taxon>Pseudomonadota</taxon>
        <taxon>Gammaproteobacteria</taxon>
        <taxon>Candidatus Palibaumannia</taxon>
    </lineage>
</organism>
<comment type="catalytic activity">
    <reaction evidence="1">
        <text>(2R)-3-phosphoglycerate + ATP = (2R)-3-phospho-glyceroyl phosphate + ADP</text>
        <dbReference type="Rhea" id="RHEA:14801"/>
        <dbReference type="ChEBI" id="CHEBI:30616"/>
        <dbReference type="ChEBI" id="CHEBI:57604"/>
        <dbReference type="ChEBI" id="CHEBI:58272"/>
        <dbReference type="ChEBI" id="CHEBI:456216"/>
        <dbReference type="EC" id="2.7.2.3"/>
    </reaction>
</comment>
<comment type="pathway">
    <text evidence="1">Carbohydrate degradation; glycolysis; pyruvate from D-glyceraldehyde 3-phosphate: step 2/5.</text>
</comment>
<comment type="subunit">
    <text evidence="1">Monomer.</text>
</comment>
<comment type="subcellular location">
    <subcellularLocation>
        <location evidence="1">Cytoplasm</location>
    </subcellularLocation>
</comment>
<comment type="similarity">
    <text evidence="1">Belongs to the phosphoglycerate kinase family.</text>
</comment>
<proteinExistence type="inferred from homology"/>
<reference key="1">
    <citation type="journal article" date="2006" name="PLoS Biol.">
        <title>Metabolic complementarity and genomics of the dual bacterial symbiosis of sharpshooters.</title>
        <authorList>
            <person name="Wu D."/>
            <person name="Daugherty S.C."/>
            <person name="Van Aken S.E."/>
            <person name="Pai G.H."/>
            <person name="Watkins K.L."/>
            <person name="Khouri H."/>
            <person name="Tallon L.J."/>
            <person name="Zaborsky J.M."/>
            <person name="Dunbar H.E."/>
            <person name="Tran P.L."/>
            <person name="Moran N.A."/>
            <person name="Eisen J.A."/>
        </authorList>
    </citation>
    <scope>NUCLEOTIDE SEQUENCE [LARGE SCALE GENOMIC DNA]</scope>
</reference>
<sequence>MAVTKITDLNLKNKRVLIRADLNVPIKDGQITSYARINASLPTIITVLKQGAASVMVTSHLGRPTEGQYDENLSLYRVVNYLQQKISIPVRLIKDYLNGISFTEKQLLVLENVRFNKGETKNDETLAKQYAALCDIFIMDAFGTAHRAHASTYGIAKYAPLVCAGLLLYNELEVLSKALNQPVRPMVAIVGGSKVSTKLMLLNKLSKISDHLIVGGGIANTFLAAQGYNVGQSLLEPNLINKAKQLLKYKNILLPTDVRVSQELDNAATLKHIREVGNNEKIFDIGDESANRFAKILQQAKTILWNGPVGAFELTHFRQGTKILANAIVSSNAFSIAGGGDTLAAIDYFNLNDKISYLSTGGGAFLSFIEGKTLPAVAMLIERNKNN</sequence>
<protein>
    <recommendedName>
        <fullName evidence="1">Phosphoglycerate kinase</fullName>
        <ecNumber evidence="1">2.7.2.3</ecNumber>
    </recommendedName>
</protein>
<gene>
    <name evidence="1" type="primary">pgk</name>
    <name type="ordered locus">BCI_0645</name>
</gene>
<feature type="chain" id="PRO_1000057971" description="Phosphoglycerate kinase">
    <location>
        <begin position="1"/>
        <end position="387"/>
    </location>
</feature>
<feature type="binding site" evidence="1">
    <location>
        <begin position="21"/>
        <end position="23"/>
    </location>
    <ligand>
        <name>substrate</name>
    </ligand>
</feature>
<feature type="binding site" evidence="1">
    <location>
        <position position="36"/>
    </location>
    <ligand>
        <name>substrate</name>
    </ligand>
</feature>
<feature type="binding site" evidence="1">
    <location>
        <begin position="60"/>
        <end position="63"/>
    </location>
    <ligand>
        <name>substrate</name>
    </ligand>
</feature>
<feature type="binding site" evidence="1">
    <location>
        <position position="114"/>
    </location>
    <ligand>
        <name>substrate</name>
    </ligand>
</feature>
<feature type="binding site" evidence="1">
    <location>
        <position position="147"/>
    </location>
    <ligand>
        <name>substrate</name>
    </ligand>
</feature>
<feature type="binding site" evidence="1">
    <location>
        <position position="198"/>
    </location>
    <ligand>
        <name>ATP</name>
        <dbReference type="ChEBI" id="CHEBI:30616"/>
    </ligand>
</feature>
<feature type="binding site" evidence="1">
    <location>
        <position position="313"/>
    </location>
    <ligand>
        <name>ATP</name>
        <dbReference type="ChEBI" id="CHEBI:30616"/>
    </ligand>
</feature>
<feature type="binding site" evidence="1">
    <location>
        <begin position="339"/>
        <end position="342"/>
    </location>
    <ligand>
        <name>ATP</name>
        <dbReference type="ChEBI" id="CHEBI:30616"/>
    </ligand>
</feature>
<name>PGK_BAUCH</name>
<dbReference type="EC" id="2.7.2.3" evidence="1"/>
<dbReference type="EMBL" id="CP000238">
    <property type="protein sequence ID" value="ABF13794.1"/>
    <property type="molecule type" value="Genomic_DNA"/>
</dbReference>
<dbReference type="RefSeq" id="WP_011520801.1">
    <property type="nucleotide sequence ID" value="NC_007984.1"/>
</dbReference>
<dbReference type="SMR" id="Q1LSJ6"/>
<dbReference type="STRING" id="374463.BCI_0645"/>
<dbReference type="KEGG" id="bci:BCI_0645"/>
<dbReference type="HOGENOM" id="CLU_025427_0_2_6"/>
<dbReference type="OrthoDB" id="9808460at2"/>
<dbReference type="UniPathway" id="UPA00109">
    <property type="reaction ID" value="UER00185"/>
</dbReference>
<dbReference type="Proteomes" id="UP000002427">
    <property type="component" value="Chromosome"/>
</dbReference>
<dbReference type="GO" id="GO:0005829">
    <property type="term" value="C:cytosol"/>
    <property type="evidence" value="ECO:0007669"/>
    <property type="project" value="TreeGrafter"/>
</dbReference>
<dbReference type="GO" id="GO:0043531">
    <property type="term" value="F:ADP binding"/>
    <property type="evidence" value="ECO:0007669"/>
    <property type="project" value="TreeGrafter"/>
</dbReference>
<dbReference type="GO" id="GO:0005524">
    <property type="term" value="F:ATP binding"/>
    <property type="evidence" value="ECO:0007669"/>
    <property type="project" value="UniProtKB-KW"/>
</dbReference>
<dbReference type="GO" id="GO:0004618">
    <property type="term" value="F:phosphoglycerate kinase activity"/>
    <property type="evidence" value="ECO:0007669"/>
    <property type="project" value="UniProtKB-UniRule"/>
</dbReference>
<dbReference type="GO" id="GO:0006094">
    <property type="term" value="P:gluconeogenesis"/>
    <property type="evidence" value="ECO:0007669"/>
    <property type="project" value="TreeGrafter"/>
</dbReference>
<dbReference type="GO" id="GO:0006096">
    <property type="term" value="P:glycolytic process"/>
    <property type="evidence" value="ECO:0007669"/>
    <property type="project" value="UniProtKB-UniRule"/>
</dbReference>
<dbReference type="FunFam" id="3.40.50.1260:FF:000001">
    <property type="entry name" value="Phosphoglycerate kinase"/>
    <property type="match status" value="1"/>
</dbReference>
<dbReference type="FunFam" id="3.40.50.1260:FF:000002">
    <property type="entry name" value="Phosphoglycerate kinase"/>
    <property type="match status" value="1"/>
</dbReference>
<dbReference type="Gene3D" id="3.40.50.1260">
    <property type="entry name" value="Phosphoglycerate kinase, N-terminal domain"/>
    <property type="match status" value="2"/>
</dbReference>
<dbReference type="HAMAP" id="MF_00145">
    <property type="entry name" value="Phosphoglyc_kinase"/>
    <property type="match status" value="1"/>
</dbReference>
<dbReference type="InterPro" id="IPR001576">
    <property type="entry name" value="Phosphoglycerate_kinase"/>
</dbReference>
<dbReference type="InterPro" id="IPR015911">
    <property type="entry name" value="Phosphoglycerate_kinase_CS"/>
</dbReference>
<dbReference type="InterPro" id="IPR015824">
    <property type="entry name" value="Phosphoglycerate_kinase_N"/>
</dbReference>
<dbReference type="InterPro" id="IPR036043">
    <property type="entry name" value="Phosphoglycerate_kinase_sf"/>
</dbReference>
<dbReference type="PANTHER" id="PTHR11406">
    <property type="entry name" value="PHOSPHOGLYCERATE KINASE"/>
    <property type="match status" value="1"/>
</dbReference>
<dbReference type="PANTHER" id="PTHR11406:SF23">
    <property type="entry name" value="PHOSPHOGLYCERATE KINASE 1, CHLOROPLASTIC-RELATED"/>
    <property type="match status" value="1"/>
</dbReference>
<dbReference type="Pfam" id="PF00162">
    <property type="entry name" value="PGK"/>
    <property type="match status" value="1"/>
</dbReference>
<dbReference type="PIRSF" id="PIRSF000724">
    <property type="entry name" value="Pgk"/>
    <property type="match status" value="1"/>
</dbReference>
<dbReference type="PRINTS" id="PR00477">
    <property type="entry name" value="PHGLYCKINASE"/>
</dbReference>
<dbReference type="SUPFAM" id="SSF53748">
    <property type="entry name" value="Phosphoglycerate kinase"/>
    <property type="match status" value="1"/>
</dbReference>
<dbReference type="PROSITE" id="PS00111">
    <property type="entry name" value="PGLYCERATE_KINASE"/>
    <property type="match status" value="1"/>
</dbReference>
<keyword id="KW-0067">ATP-binding</keyword>
<keyword id="KW-0963">Cytoplasm</keyword>
<keyword id="KW-0324">Glycolysis</keyword>
<keyword id="KW-0418">Kinase</keyword>
<keyword id="KW-0547">Nucleotide-binding</keyword>
<keyword id="KW-1185">Reference proteome</keyword>
<keyword id="KW-0808">Transferase</keyword>
<evidence type="ECO:0000255" key="1">
    <source>
        <dbReference type="HAMAP-Rule" id="MF_00145"/>
    </source>
</evidence>